<proteinExistence type="predicted"/>
<reference key="1">
    <citation type="journal article" date="2002" name="J. Bacteriol.">
        <title>Whole-genome comparison of Mycobacterium tuberculosis clinical and laboratory strains.</title>
        <authorList>
            <person name="Fleischmann R.D."/>
            <person name="Alland D."/>
            <person name="Eisen J.A."/>
            <person name="Carpenter L."/>
            <person name="White O."/>
            <person name="Peterson J.D."/>
            <person name="DeBoy R.T."/>
            <person name="Dodson R.J."/>
            <person name="Gwinn M.L."/>
            <person name="Haft D.H."/>
            <person name="Hickey E.K."/>
            <person name="Kolonay J.F."/>
            <person name="Nelson W.C."/>
            <person name="Umayam L.A."/>
            <person name="Ermolaeva M.D."/>
            <person name="Salzberg S.L."/>
            <person name="Delcher A."/>
            <person name="Utterback T.R."/>
            <person name="Weidman J.F."/>
            <person name="Khouri H.M."/>
            <person name="Gill J."/>
            <person name="Mikula A."/>
            <person name="Bishai W."/>
            <person name="Jacobs W.R. Jr."/>
            <person name="Venter J.C."/>
            <person name="Fraser C.M."/>
        </authorList>
    </citation>
    <scope>NUCLEOTIDE SEQUENCE [LARGE SCALE GENOMIC DNA]</scope>
    <source>
        <strain>CDC 1551 / Oshkosh</strain>
    </source>
</reference>
<comment type="subcellular location">
    <subcellularLocation>
        <location evidence="2">Cell membrane</location>
        <topology evidence="2">Multi-pass membrane protein</topology>
    </subcellularLocation>
</comment>
<organism>
    <name type="scientific">Mycobacterium tuberculosis (strain CDC 1551 / Oshkosh)</name>
    <dbReference type="NCBI Taxonomy" id="83331"/>
    <lineage>
        <taxon>Bacteria</taxon>
        <taxon>Bacillati</taxon>
        <taxon>Actinomycetota</taxon>
        <taxon>Actinomycetes</taxon>
        <taxon>Mycobacteriales</taxon>
        <taxon>Mycobacteriaceae</taxon>
        <taxon>Mycobacterium</taxon>
        <taxon>Mycobacterium tuberculosis complex</taxon>
    </lineage>
</organism>
<sequence>MSDHDRDFDVVVVGGGHNGLVAAAYLARAGLRVRLLERLAQTGGAAVSIQAFDGVEVALSRYSYLVSLLPSRIVADLGAPVRLARRPFSSYTPAPATAGRSGLLIGPTGEPRAAHLAAIGAAPDAHGFAAFYRRCRLVTARLWPTLIEPLRTREQARRDIVEYGGHEAAAAWQAMVDEPIGHAIAGAVANDLLRGVIATDALIGTFARMHEPSLMQNICFLYHLVGGGTGVWHVPIGGMGSVTSALATAAARHGAEIVTGADVFALDPDGTVRYHSDGSDGAEHLVRGRFVLVGVTPAVLASLLGEPVAALAPGAQVKVNMVVRRLPRLRDDSVTPQQAFAGTFHVNETWSQLDAAYSQAASGRLPDPLPCEAYCHSLTDPSILSARLRDAGAQTLTVFGLHTPHSVFGDTEGLAERLTAAVLASLNSVLAEPIQDVLWTDAQSKPCIETTTTLDLQRTLGMTGGNIFHGALSWPFADNDDPLDTPARQWGVATDHERIMLCGSGARRGGAVSGIGGHNAAMAVLACLASRRKSP</sequence>
<accession>P9WKP6</accession>
<accession>L0T536</accession>
<accession>P64751</accession>
<accession>Q10555</accession>
<evidence type="ECO:0000255" key="1"/>
<evidence type="ECO:0000305" key="2"/>
<gene>
    <name type="ordered locus">MT0921</name>
</gene>
<protein>
    <recommendedName>
        <fullName>Uncharacterized protein MT0921</fullName>
    </recommendedName>
</protein>
<name>Y897_MYCTO</name>
<dbReference type="EMBL" id="AE000516">
    <property type="protein sequence ID" value="AAK45167.1"/>
    <property type="molecule type" value="Genomic_DNA"/>
</dbReference>
<dbReference type="PIR" id="F70782">
    <property type="entry name" value="F70782"/>
</dbReference>
<dbReference type="RefSeq" id="WP_003900230.1">
    <property type="nucleotide sequence ID" value="NZ_KK341227.1"/>
</dbReference>
<dbReference type="SMR" id="P9WKP6"/>
<dbReference type="KEGG" id="mtc:MT0921"/>
<dbReference type="PATRIC" id="fig|83331.31.peg.989"/>
<dbReference type="HOGENOM" id="CLU_019327_0_1_11"/>
<dbReference type="Proteomes" id="UP000001020">
    <property type="component" value="Chromosome"/>
</dbReference>
<dbReference type="GO" id="GO:0005829">
    <property type="term" value="C:cytosol"/>
    <property type="evidence" value="ECO:0007669"/>
    <property type="project" value="TreeGrafter"/>
</dbReference>
<dbReference type="GO" id="GO:0005886">
    <property type="term" value="C:plasma membrane"/>
    <property type="evidence" value="ECO:0007669"/>
    <property type="project" value="UniProtKB-SubCell"/>
</dbReference>
<dbReference type="Gene3D" id="3.50.50.60">
    <property type="entry name" value="FAD/NAD(P)-binding domain"/>
    <property type="match status" value="1"/>
</dbReference>
<dbReference type="InterPro" id="IPR036188">
    <property type="entry name" value="FAD/NAD-bd_sf"/>
</dbReference>
<dbReference type="PANTHER" id="PTHR10668">
    <property type="entry name" value="PHYTOENE DEHYDROGENASE"/>
    <property type="match status" value="1"/>
</dbReference>
<dbReference type="PANTHER" id="PTHR10668:SF103">
    <property type="entry name" value="PYRIDINE NUCLEOTIDE-DISULFIDE OXIDOREDUCTASE DOMAIN-CONTAINING PROTEIN 2"/>
    <property type="match status" value="1"/>
</dbReference>
<dbReference type="Pfam" id="PF13450">
    <property type="entry name" value="NAD_binding_8"/>
    <property type="match status" value="1"/>
</dbReference>
<dbReference type="SUPFAM" id="SSF51905">
    <property type="entry name" value="FAD/NAD(P)-binding domain"/>
    <property type="match status" value="1"/>
</dbReference>
<feature type="chain" id="PRO_0000427617" description="Uncharacterized protein MT0921">
    <location>
        <begin position="1"/>
        <end position="535"/>
    </location>
</feature>
<feature type="transmembrane region" description="Helical" evidence="1">
    <location>
        <begin position="7"/>
        <end position="27"/>
    </location>
</feature>
<feature type="transmembrane region" description="Helical" evidence="1">
    <location>
        <begin position="509"/>
        <end position="529"/>
    </location>
</feature>
<keyword id="KW-1003">Cell membrane</keyword>
<keyword id="KW-0472">Membrane</keyword>
<keyword id="KW-1185">Reference proteome</keyword>
<keyword id="KW-0812">Transmembrane</keyword>
<keyword id="KW-1133">Transmembrane helix</keyword>